<reference key="1">
    <citation type="journal article" date="2004" name="Proc. Natl. Acad. Sci. U.S.A.">
        <title>Structural flexibility in the Burkholderia mallei genome.</title>
        <authorList>
            <person name="Nierman W.C."/>
            <person name="DeShazer D."/>
            <person name="Kim H.S."/>
            <person name="Tettelin H."/>
            <person name="Nelson K.E."/>
            <person name="Feldblyum T.V."/>
            <person name="Ulrich R.L."/>
            <person name="Ronning C.M."/>
            <person name="Brinkac L.M."/>
            <person name="Daugherty S.C."/>
            <person name="Davidsen T.D."/>
            <person name="DeBoy R.T."/>
            <person name="Dimitrov G."/>
            <person name="Dodson R.J."/>
            <person name="Durkin A.S."/>
            <person name="Gwinn M.L."/>
            <person name="Haft D.H."/>
            <person name="Khouri H.M."/>
            <person name="Kolonay J.F."/>
            <person name="Madupu R."/>
            <person name="Mohammoud Y."/>
            <person name="Nelson W.C."/>
            <person name="Radune D."/>
            <person name="Romero C.M."/>
            <person name="Sarria S."/>
            <person name="Selengut J."/>
            <person name="Shamblin C."/>
            <person name="Sullivan S.A."/>
            <person name="White O."/>
            <person name="Yu Y."/>
            <person name="Zafar N."/>
            <person name="Zhou L."/>
            <person name="Fraser C.M."/>
        </authorList>
    </citation>
    <scope>NUCLEOTIDE SEQUENCE [LARGE SCALE GENOMIC DNA]</scope>
    <source>
        <strain>ATCC 23344</strain>
    </source>
</reference>
<name>ACYP_BURMA</name>
<organism>
    <name type="scientific">Burkholderia mallei (strain ATCC 23344)</name>
    <dbReference type="NCBI Taxonomy" id="243160"/>
    <lineage>
        <taxon>Bacteria</taxon>
        <taxon>Pseudomonadati</taxon>
        <taxon>Pseudomonadota</taxon>
        <taxon>Betaproteobacteria</taxon>
        <taxon>Burkholderiales</taxon>
        <taxon>Burkholderiaceae</taxon>
        <taxon>Burkholderia</taxon>
        <taxon>pseudomallei group</taxon>
    </lineage>
</organism>
<comment type="catalytic activity">
    <reaction>
        <text>an acyl phosphate + H2O = a carboxylate + phosphate + H(+)</text>
        <dbReference type="Rhea" id="RHEA:14965"/>
        <dbReference type="ChEBI" id="CHEBI:15377"/>
        <dbReference type="ChEBI" id="CHEBI:15378"/>
        <dbReference type="ChEBI" id="CHEBI:29067"/>
        <dbReference type="ChEBI" id="CHEBI:43474"/>
        <dbReference type="ChEBI" id="CHEBI:59918"/>
        <dbReference type="EC" id="3.6.1.7"/>
    </reaction>
</comment>
<comment type="similarity">
    <text evidence="2">Belongs to the acylphosphatase family.</text>
</comment>
<keyword id="KW-0378">Hydrolase</keyword>
<keyword id="KW-1185">Reference proteome</keyword>
<proteinExistence type="inferred from homology"/>
<dbReference type="EC" id="3.6.1.7"/>
<dbReference type="EMBL" id="CP000011">
    <property type="protein sequence ID" value="AAU45688.1"/>
    <property type="molecule type" value="Genomic_DNA"/>
</dbReference>
<dbReference type="RefSeq" id="WP_004187760.1">
    <property type="nucleotide sequence ID" value="NC_006349.2"/>
</dbReference>
<dbReference type="RefSeq" id="YP_106480.1">
    <property type="nucleotide sequence ID" value="NC_006349.2"/>
</dbReference>
<dbReference type="SMR" id="Q62A02"/>
<dbReference type="KEGG" id="bma:BMAA1957"/>
<dbReference type="PATRIC" id="fig|243160.12.peg.5574"/>
<dbReference type="eggNOG" id="COG1254">
    <property type="taxonomic scope" value="Bacteria"/>
</dbReference>
<dbReference type="HOGENOM" id="CLU_141932_1_2_4"/>
<dbReference type="Proteomes" id="UP000006693">
    <property type="component" value="Chromosome 2"/>
</dbReference>
<dbReference type="GO" id="GO:0003998">
    <property type="term" value="F:acylphosphatase activity"/>
    <property type="evidence" value="ECO:0007669"/>
    <property type="project" value="UniProtKB-EC"/>
</dbReference>
<dbReference type="Gene3D" id="3.30.70.100">
    <property type="match status" value="1"/>
</dbReference>
<dbReference type="InterPro" id="IPR020456">
    <property type="entry name" value="Acylphosphatase"/>
</dbReference>
<dbReference type="InterPro" id="IPR001792">
    <property type="entry name" value="Acylphosphatase-like_dom"/>
</dbReference>
<dbReference type="InterPro" id="IPR036046">
    <property type="entry name" value="Acylphosphatase-like_dom_sf"/>
</dbReference>
<dbReference type="InterPro" id="IPR017968">
    <property type="entry name" value="Acylphosphatase_CS"/>
</dbReference>
<dbReference type="NCBIfam" id="NF010998">
    <property type="entry name" value="PRK14424.1"/>
    <property type="match status" value="1"/>
</dbReference>
<dbReference type="PANTHER" id="PTHR47268">
    <property type="entry name" value="ACYLPHOSPHATASE"/>
    <property type="match status" value="1"/>
</dbReference>
<dbReference type="PANTHER" id="PTHR47268:SF4">
    <property type="entry name" value="ACYLPHOSPHATASE"/>
    <property type="match status" value="1"/>
</dbReference>
<dbReference type="Pfam" id="PF00708">
    <property type="entry name" value="Acylphosphatase"/>
    <property type="match status" value="1"/>
</dbReference>
<dbReference type="PRINTS" id="PR00112">
    <property type="entry name" value="ACYLPHPHTASE"/>
</dbReference>
<dbReference type="SUPFAM" id="SSF54975">
    <property type="entry name" value="Acylphosphatase/BLUF domain-like"/>
    <property type="match status" value="1"/>
</dbReference>
<dbReference type="PROSITE" id="PS00150">
    <property type="entry name" value="ACYLPHOSPHATASE_1"/>
    <property type="match status" value="1"/>
</dbReference>
<dbReference type="PROSITE" id="PS00151">
    <property type="entry name" value="ACYLPHOSPHATASE_2"/>
    <property type="match status" value="1"/>
</dbReference>
<dbReference type="PROSITE" id="PS51160">
    <property type="entry name" value="ACYLPHOSPHATASE_3"/>
    <property type="match status" value="1"/>
</dbReference>
<feature type="chain" id="PRO_0000326670" description="Acylphosphatase">
    <location>
        <begin position="1"/>
        <end position="98"/>
    </location>
</feature>
<feature type="domain" description="Acylphosphatase-like" evidence="1">
    <location>
        <begin position="12"/>
        <end position="98"/>
    </location>
</feature>
<feature type="active site" evidence="1">
    <location>
        <position position="27"/>
    </location>
</feature>
<feature type="active site" evidence="1">
    <location>
        <position position="45"/>
    </location>
</feature>
<accession>Q62A02</accession>
<sequence>MSGDDLDERIETYYVRVRGVVQGVGFRHATVREAHALKLRGWVANLDDGSVEAMLQGSAPQIDRMLAWLRHGPPAAHVTEVTFEEHRTDKRFERFQQH</sequence>
<gene>
    <name type="primary">acyP</name>
    <name type="ordered locus">BMAA1957</name>
</gene>
<protein>
    <recommendedName>
        <fullName>Acylphosphatase</fullName>
        <ecNumber>3.6.1.7</ecNumber>
    </recommendedName>
    <alternativeName>
        <fullName>Acylphosphate phosphohydrolase</fullName>
    </alternativeName>
</protein>
<evidence type="ECO:0000255" key="1">
    <source>
        <dbReference type="PROSITE-ProRule" id="PRU00520"/>
    </source>
</evidence>
<evidence type="ECO:0000305" key="2"/>